<evidence type="ECO:0000250" key="1">
    <source>
        <dbReference type="UniProtKB" id="O14832"/>
    </source>
</evidence>
<evidence type="ECO:0000305" key="2"/>
<feature type="chain" id="PRO_0000442005" description="Putative phytanoyl-CoA dioxygenase">
    <location>
        <begin position="1"/>
        <end position="349"/>
    </location>
</feature>
<feature type="binding site" evidence="1">
    <location>
        <position position="118"/>
    </location>
    <ligand>
        <name>2-oxoglutarate</name>
        <dbReference type="ChEBI" id="CHEBI:16810"/>
    </ligand>
</feature>
<feature type="binding site" evidence="1">
    <location>
        <begin position="169"/>
        <end position="171"/>
    </location>
    <ligand>
        <name>2-oxoglutarate</name>
        <dbReference type="ChEBI" id="CHEBI:16810"/>
    </ligand>
</feature>
<feature type="binding site" evidence="1">
    <location>
        <position position="169"/>
    </location>
    <ligand>
        <name>Fe cation</name>
        <dbReference type="ChEBI" id="CHEBI:24875"/>
    </ligand>
</feature>
<feature type="binding site" evidence="1">
    <location>
        <position position="171"/>
    </location>
    <ligand>
        <name>Fe cation</name>
        <dbReference type="ChEBI" id="CHEBI:24875"/>
    </ligand>
</feature>
<name>PAHX_DICDI</name>
<proteinExistence type="inferred from homology"/>
<accession>P0DPA0</accession>
<accession>Q54J59</accession>
<gene>
    <name type="ORF">DDB_G0349042</name>
</gene>
<comment type="function">
    <text evidence="1">Converts phytanoyl-CoA to 2-hydroxyphytanoyl-CoA.</text>
</comment>
<comment type="catalytic activity">
    <reaction evidence="1">
        <text>phytanoyl-CoA + 2-oxoglutarate + O2 = 2-hydroxyphytanoyl-CoA + succinate + CO2</text>
        <dbReference type="Rhea" id="RHEA:16065"/>
        <dbReference type="ChEBI" id="CHEBI:15379"/>
        <dbReference type="ChEBI" id="CHEBI:16526"/>
        <dbReference type="ChEBI" id="CHEBI:16810"/>
        <dbReference type="ChEBI" id="CHEBI:30031"/>
        <dbReference type="ChEBI" id="CHEBI:57334"/>
        <dbReference type="ChEBI" id="CHEBI:57391"/>
        <dbReference type="EC" id="1.14.11.18"/>
    </reaction>
</comment>
<comment type="cofactor">
    <cofactor evidence="1">
        <name>Fe cation</name>
        <dbReference type="ChEBI" id="CHEBI:24875"/>
    </cofactor>
</comment>
<comment type="cofactor">
    <cofactor evidence="1">
        <name>L-ascorbate</name>
        <dbReference type="ChEBI" id="CHEBI:38290"/>
    </cofactor>
</comment>
<comment type="pathway">
    <text evidence="1">Lipid metabolism; fatty acid metabolism.</text>
</comment>
<comment type="similarity">
    <text evidence="2">Belongs to the PhyH family.</text>
</comment>
<sequence>MEEILKSFKISIDNEGYSKSFSLEDLDNFNNNNNNNNNNNNNEENNPYEFFERYGFLVIRNVISEEDCNKTVGEIFDIIESKVKTFDRNDQSTWDQTFSEDGSSIPQYGSPSKPPIFKKQFLMNRTNPNVYKVFSKLLKNQDLMVNHDRACFFRPTLVNPKWKTNDNVHLDMNPYNWMGNGDICREELSKLTYARLGEFIVENNQPTQNDGLQLQGVINLLDNQELDGGYCVTPGFHTIFNEYFTSKKPQYTSPSWNFDKKDIAFKYAKRISMRKGSIVVWNQQMPHGSMSNKSFNPRMAQFIKIFPTSTVNSVRYQHRKNQIKSIIENSDELKDFPLNQISSQLLGLN</sequence>
<organism>
    <name type="scientific">Dictyostelium discoideum</name>
    <name type="common">Social amoeba</name>
    <dbReference type="NCBI Taxonomy" id="44689"/>
    <lineage>
        <taxon>Eukaryota</taxon>
        <taxon>Amoebozoa</taxon>
        <taxon>Evosea</taxon>
        <taxon>Eumycetozoa</taxon>
        <taxon>Dictyostelia</taxon>
        <taxon>Dictyosteliales</taxon>
        <taxon>Dictyosteliaceae</taxon>
        <taxon>Dictyostelium</taxon>
    </lineage>
</organism>
<keyword id="KW-0223">Dioxygenase</keyword>
<keyword id="KW-0408">Iron</keyword>
<keyword id="KW-0479">Metal-binding</keyword>
<keyword id="KW-0560">Oxidoreductase</keyword>
<keyword id="KW-1185">Reference proteome</keyword>
<reference key="1">
    <citation type="journal article" date="2005" name="Nature">
        <title>The genome of the social amoeba Dictyostelium discoideum.</title>
        <authorList>
            <person name="Eichinger L."/>
            <person name="Pachebat J.A."/>
            <person name="Gloeckner G."/>
            <person name="Rajandream M.A."/>
            <person name="Sucgang R."/>
            <person name="Berriman M."/>
            <person name="Song J."/>
            <person name="Olsen R."/>
            <person name="Szafranski K."/>
            <person name="Xu Q."/>
            <person name="Tunggal B."/>
            <person name="Kummerfeld S."/>
            <person name="Madera M."/>
            <person name="Konfortov B.A."/>
            <person name="Rivero F."/>
            <person name="Bankier A.T."/>
            <person name="Lehmann R."/>
            <person name="Hamlin N."/>
            <person name="Davies R."/>
            <person name="Gaudet P."/>
            <person name="Fey P."/>
            <person name="Pilcher K."/>
            <person name="Chen G."/>
            <person name="Saunders D."/>
            <person name="Sodergren E.J."/>
            <person name="Davis P."/>
            <person name="Kerhornou A."/>
            <person name="Nie X."/>
            <person name="Hall N."/>
            <person name="Anjard C."/>
            <person name="Hemphill L."/>
            <person name="Bason N."/>
            <person name="Farbrother P."/>
            <person name="Desany B."/>
            <person name="Just E."/>
            <person name="Morio T."/>
            <person name="Rost R."/>
            <person name="Churcher C.M."/>
            <person name="Cooper J."/>
            <person name="Haydock S."/>
            <person name="van Driessche N."/>
            <person name="Cronin A."/>
            <person name="Goodhead I."/>
            <person name="Muzny D.M."/>
            <person name="Mourier T."/>
            <person name="Pain A."/>
            <person name="Lu M."/>
            <person name="Harper D."/>
            <person name="Lindsay R."/>
            <person name="Hauser H."/>
            <person name="James K.D."/>
            <person name="Quiles M."/>
            <person name="Madan Babu M."/>
            <person name="Saito T."/>
            <person name="Buchrieser C."/>
            <person name="Wardroper A."/>
            <person name="Felder M."/>
            <person name="Thangavelu M."/>
            <person name="Johnson D."/>
            <person name="Knights A."/>
            <person name="Loulseged H."/>
            <person name="Mungall K.L."/>
            <person name="Oliver K."/>
            <person name="Price C."/>
            <person name="Quail M.A."/>
            <person name="Urushihara H."/>
            <person name="Hernandez J."/>
            <person name="Rabbinowitsch E."/>
            <person name="Steffen D."/>
            <person name="Sanders M."/>
            <person name="Ma J."/>
            <person name="Kohara Y."/>
            <person name="Sharp S."/>
            <person name="Simmonds M.N."/>
            <person name="Spiegler S."/>
            <person name="Tivey A."/>
            <person name="Sugano S."/>
            <person name="White B."/>
            <person name="Walker D."/>
            <person name="Woodward J.R."/>
            <person name="Winckler T."/>
            <person name="Tanaka Y."/>
            <person name="Shaulsky G."/>
            <person name="Schleicher M."/>
            <person name="Weinstock G.M."/>
            <person name="Rosenthal A."/>
            <person name="Cox E.C."/>
            <person name="Chisholm R.L."/>
            <person name="Gibbs R.A."/>
            <person name="Loomis W.F."/>
            <person name="Platzer M."/>
            <person name="Kay R.R."/>
            <person name="Williams J.G."/>
            <person name="Dear P.H."/>
            <person name="Noegel A.A."/>
            <person name="Barrell B.G."/>
            <person name="Kuspa A."/>
        </authorList>
    </citation>
    <scope>NUCLEOTIDE SEQUENCE [LARGE SCALE GENOMIC DNA]</scope>
    <source>
        <strain>AX4</strain>
    </source>
</reference>
<protein>
    <recommendedName>
        <fullName evidence="1">Putative phytanoyl-CoA dioxygenase</fullName>
        <ecNumber evidence="1">1.14.11.18</ecNumber>
    </recommendedName>
    <alternativeName>
        <fullName evidence="1">Phytanic acid oxidase</fullName>
    </alternativeName>
    <alternativeName>
        <fullName evidence="1">Phytanoyl-CoA alpha-hydroxylase</fullName>
        <shortName evidence="1">PhyH</shortName>
    </alternativeName>
</protein>
<dbReference type="EC" id="1.14.11.18" evidence="1"/>
<dbReference type="EMBL" id="AAFI02000169">
    <property type="status" value="NOT_ANNOTATED_CDS"/>
    <property type="molecule type" value="Genomic_DNA"/>
</dbReference>
<dbReference type="FunCoup" id="P0DPA0">
    <property type="interactions" value="1"/>
</dbReference>
<dbReference type="GlyGen" id="P0DPA0">
    <property type="glycosylation" value="1 site"/>
</dbReference>
<dbReference type="dictyBase" id="DDB_G0349042"/>
<dbReference type="VEuPathDB" id="AmoebaDB:DDB_G0288313"/>
<dbReference type="InParanoid" id="P0DPA0"/>
<dbReference type="UniPathway" id="UPA00199"/>
<dbReference type="PRO" id="PR:P0DPA0"/>
<dbReference type="Proteomes" id="UP000002195">
    <property type="component" value="Chromosome 5"/>
</dbReference>
<dbReference type="GO" id="GO:0046872">
    <property type="term" value="F:metal ion binding"/>
    <property type="evidence" value="ECO:0007669"/>
    <property type="project" value="UniProtKB-KW"/>
</dbReference>
<dbReference type="GO" id="GO:0048244">
    <property type="term" value="F:phytanoyl-CoA dioxygenase activity"/>
    <property type="evidence" value="ECO:0007669"/>
    <property type="project" value="UniProtKB-EC"/>
</dbReference>
<dbReference type="GO" id="GO:0006631">
    <property type="term" value="P:fatty acid metabolic process"/>
    <property type="evidence" value="ECO:0007669"/>
    <property type="project" value="UniProtKB-UniPathway"/>
</dbReference>
<dbReference type="Gene3D" id="2.60.120.620">
    <property type="entry name" value="q2cbj1_9rhob like domain"/>
    <property type="match status" value="1"/>
</dbReference>
<dbReference type="InterPro" id="IPR008775">
    <property type="entry name" value="Phytyl_CoA_dOase-like"/>
</dbReference>
<dbReference type="PANTHER" id="PTHR31630:SF6">
    <property type="entry name" value="PHYTANOYL-COA DIOXYGENASE-RELATED"/>
    <property type="match status" value="1"/>
</dbReference>
<dbReference type="PANTHER" id="PTHR31630">
    <property type="entry name" value="PHYTANOYL-COA DIOXYGENASE-RELATED-RELATED"/>
    <property type="match status" value="1"/>
</dbReference>
<dbReference type="Pfam" id="PF05721">
    <property type="entry name" value="PhyH"/>
    <property type="match status" value="1"/>
</dbReference>
<dbReference type="SUPFAM" id="SSF51197">
    <property type="entry name" value="Clavaminate synthase-like"/>
    <property type="match status" value="1"/>
</dbReference>